<evidence type="ECO:0000255" key="1">
    <source>
        <dbReference type="HAMAP-Rule" id="MF_00013"/>
    </source>
</evidence>
<evidence type="ECO:0000255" key="2">
    <source>
        <dbReference type="PROSITE-ProRule" id="PRU01067"/>
    </source>
</evidence>
<keyword id="KW-0012">Acyltransferase</keyword>
<keyword id="KW-0963">Cytoplasm</keyword>
<keyword id="KW-0808">Transferase</keyword>
<name>LIPB_EHRRG</name>
<protein>
    <recommendedName>
        <fullName evidence="1">Octanoyltransferase</fullName>
        <ecNumber evidence="1">2.3.1.181</ecNumber>
    </recommendedName>
    <alternativeName>
        <fullName evidence="1">Lipoate-protein ligase B</fullName>
    </alternativeName>
    <alternativeName>
        <fullName evidence="1">Lipoyl/octanoyl transferase</fullName>
    </alternativeName>
    <alternativeName>
        <fullName evidence="1">Octanoyl-[acyl-carrier-protein]-protein N-octanoyltransferase</fullName>
    </alternativeName>
</protein>
<dbReference type="EC" id="2.3.1.181" evidence="1"/>
<dbReference type="EMBL" id="CR925677">
    <property type="protein sequence ID" value="CAI28110.1"/>
    <property type="molecule type" value="Genomic_DNA"/>
</dbReference>
<dbReference type="RefSeq" id="WP_011155316.1">
    <property type="nucleotide sequence ID" value="NC_006831.1"/>
</dbReference>
<dbReference type="SMR" id="Q5FFZ7"/>
<dbReference type="GeneID" id="33057580"/>
<dbReference type="KEGG" id="erg:ERGA_CDS_06580"/>
<dbReference type="HOGENOM" id="CLU_035168_3_0_5"/>
<dbReference type="OrthoDB" id="9787061at2"/>
<dbReference type="UniPathway" id="UPA00538">
    <property type="reaction ID" value="UER00592"/>
</dbReference>
<dbReference type="Proteomes" id="UP000000533">
    <property type="component" value="Chromosome"/>
</dbReference>
<dbReference type="GO" id="GO:0005737">
    <property type="term" value="C:cytoplasm"/>
    <property type="evidence" value="ECO:0007669"/>
    <property type="project" value="UniProtKB-SubCell"/>
</dbReference>
<dbReference type="GO" id="GO:0033819">
    <property type="term" value="F:lipoyl(octanoyl) transferase activity"/>
    <property type="evidence" value="ECO:0007669"/>
    <property type="project" value="UniProtKB-EC"/>
</dbReference>
<dbReference type="GO" id="GO:0036211">
    <property type="term" value="P:protein modification process"/>
    <property type="evidence" value="ECO:0007669"/>
    <property type="project" value="InterPro"/>
</dbReference>
<dbReference type="CDD" id="cd16444">
    <property type="entry name" value="LipB"/>
    <property type="match status" value="1"/>
</dbReference>
<dbReference type="Gene3D" id="3.30.930.10">
    <property type="entry name" value="Bira Bifunctional Protein, Domain 2"/>
    <property type="match status" value="1"/>
</dbReference>
<dbReference type="HAMAP" id="MF_00013">
    <property type="entry name" value="LipB"/>
    <property type="match status" value="1"/>
</dbReference>
<dbReference type="InterPro" id="IPR045864">
    <property type="entry name" value="aa-tRNA-synth_II/BPL/LPL"/>
</dbReference>
<dbReference type="InterPro" id="IPR004143">
    <property type="entry name" value="BPL_LPL_catalytic"/>
</dbReference>
<dbReference type="InterPro" id="IPR000544">
    <property type="entry name" value="Octanoyltransferase"/>
</dbReference>
<dbReference type="InterPro" id="IPR020605">
    <property type="entry name" value="Octanoyltransferase_CS"/>
</dbReference>
<dbReference type="NCBIfam" id="TIGR00214">
    <property type="entry name" value="lipB"/>
    <property type="match status" value="1"/>
</dbReference>
<dbReference type="NCBIfam" id="NF010921">
    <property type="entry name" value="PRK14341.1"/>
    <property type="match status" value="1"/>
</dbReference>
<dbReference type="PANTHER" id="PTHR10993:SF7">
    <property type="entry name" value="LIPOYLTRANSFERASE 2, MITOCHONDRIAL-RELATED"/>
    <property type="match status" value="1"/>
</dbReference>
<dbReference type="PANTHER" id="PTHR10993">
    <property type="entry name" value="OCTANOYLTRANSFERASE"/>
    <property type="match status" value="1"/>
</dbReference>
<dbReference type="Pfam" id="PF21948">
    <property type="entry name" value="LplA-B_cat"/>
    <property type="match status" value="1"/>
</dbReference>
<dbReference type="PIRSF" id="PIRSF016262">
    <property type="entry name" value="LPLase"/>
    <property type="match status" value="1"/>
</dbReference>
<dbReference type="SUPFAM" id="SSF55681">
    <property type="entry name" value="Class II aaRS and biotin synthetases"/>
    <property type="match status" value="1"/>
</dbReference>
<dbReference type="PROSITE" id="PS51733">
    <property type="entry name" value="BPL_LPL_CATALYTIC"/>
    <property type="match status" value="1"/>
</dbReference>
<dbReference type="PROSITE" id="PS01313">
    <property type="entry name" value="LIPB"/>
    <property type="match status" value="1"/>
</dbReference>
<comment type="function">
    <text evidence="1">Catalyzes the transfer of endogenously produced octanoic acid from octanoyl-acyl-carrier-protein onto the lipoyl domains of lipoate-dependent enzymes. Lipoyl-ACP can also act as a substrate although octanoyl-ACP is likely to be the physiological substrate.</text>
</comment>
<comment type="catalytic activity">
    <reaction evidence="1">
        <text>octanoyl-[ACP] + L-lysyl-[protein] = N(6)-octanoyl-L-lysyl-[protein] + holo-[ACP] + H(+)</text>
        <dbReference type="Rhea" id="RHEA:17665"/>
        <dbReference type="Rhea" id="RHEA-COMP:9636"/>
        <dbReference type="Rhea" id="RHEA-COMP:9685"/>
        <dbReference type="Rhea" id="RHEA-COMP:9752"/>
        <dbReference type="Rhea" id="RHEA-COMP:9928"/>
        <dbReference type="ChEBI" id="CHEBI:15378"/>
        <dbReference type="ChEBI" id="CHEBI:29969"/>
        <dbReference type="ChEBI" id="CHEBI:64479"/>
        <dbReference type="ChEBI" id="CHEBI:78463"/>
        <dbReference type="ChEBI" id="CHEBI:78809"/>
        <dbReference type="EC" id="2.3.1.181"/>
    </reaction>
</comment>
<comment type="pathway">
    <text evidence="1">Protein modification; protein lipoylation via endogenous pathway; protein N(6)-(lipoyl)lysine from octanoyl-[acyl-carrier-protein]: step 1/2.</text>
</comment>
<comment type="subcellular location">
    <subcellularLocation>
        <location evidence="1">Cytoplasm</location>
    </subcellularLocation>
</comment>
<comment type="miscellaneous">
    <text evidence="1">In the reaction, the free carboxyl group of octanoic acid is attached via an amide linkage to the epsilon-amino group of a specific lysine residue of lipoyl domains of lipoate-dependent enzymes.</text>
</comment>
<comment type="similarity">
    <text evidence="1">Belongs to the LipB family.</text>
</comment>
<sequence>MEWKIESLPVPYDKAMCFMQQRVEGIANKTQDELVWLLEHFPLYTAGTSARSEELLTDSLFPVYSTGRGGKYTYHGPGQRIAYVMMDLKARDKCNVRLYVETLGEWIVKTLKHFSIRSYFNPNLIGVWVNHNGSEKKIAAFGIRIRKWITYHGVSINVFTDLSHYSGIIPCGIKEYGITSLKTLGVNILYEEFDVVLKKEFNKVFCNC</sequence>
<gene>
    <name evidence="1" type="primary">lipB</name>
    <name type="ordered locus">ERGA_CDS_06580</name>
</gene>
<proteinExistence type="inferred from homology"/>
<organism>
    <name type="scientific">Ehrlichia ruminantium (strain Gardel)</name>
    <dbReference type="NCBI Taxonomy" id="302409"/>
    <lineage>
        <taxon>Bacteria</taxon>
        <taxon>Pseudomonadati</taxon>
        <taxon>Pseudomonadota</taxon>
        <taxon>Alphaproteobacteria</taxon>
        <taxon>Rickettsiales</taxon>
        <taxon>Anaplasmataceae</taxon>
        <taxon>Ehrlichia</taxon>
    </lineage>
</organism>
<feature type="chain" id="PRO_0000242720" description="Octanoyltransferase">
    <location>
        <begin position="1"/>
        <end position="208"/>
    </location>
</feature>
<feature type="domain" description="BPL/LPL catalytic" evidence="2">
    <location>
        <begin position="29"/>
        <end position="208"/>
    </location>
</feature>
<feature type="active site" description="Acyl-thioester intermediate" evidence="1">
    <location>
        <position position="171"/>
    </location>
</feature>
<feature type="binding site" evidence="1">
    <location>
        <begin position="68"/>
        <end position="75"/>
    </location>
    <ligand>
        <name>substrate</name>
    </ligand>
</feature>
<feature type="binding site" evidence="1">
    <location>
        <begin position="140"/>
        <end position="142"/>
    </location>
    <ligand>
        <name>substrate</name>
    </ligand>
</feature>
<feature type="binding site" evidence="1">
    <location>
        <begin position="153"/>
        <end position="155"/>
    </location>
    <ligand>
        <name>substrate</name>
    </ligand>
</feature>
<feature type="site" description="Lowers pKa of active site Cys" evidence="1">
    <location>
        <position position="137"/>
    </location>
</feature>
<accession>Q5FFZ7</accession>
<reference key="1">
    <citation type="journal article" date="2006" name="J. Bacteriol.">
        <title>Comparative genomic analysis of three strains of Ehrlichia ruminantium reveals an active process of genome size plasticity.</title>
        <authorList>
            <person name="Frutos R."/>
            <person name="Viari A."/>
            <person name="Ferraz C."/>
            <person name="Morgat A."/>
            <person name="Eychenie S."/>
            <person name="Kandassamy Y."/>
            <person name="Chantal I."/>
            <person name="Bensaid A."/>
            <person name="Coissac E."/>
            <person name="Vachiery N."/>
            <person name="Demaille J."/>
            <person name="Martinez D."/>
        </authorList>
    </citation>
    <scope>NUCLEOTIDE SEQUENCE [LARGE SCALE GENOMIC DNA]</scope>
    <source>
        <strain>Gardel</strain>
    </source>
</reference>